<protein>
    <recommendedName>
        <fullName evidence="1">4-hydroxy-tetrahydrodipicolinate synthase</fullName>
        <shortName evidence="1">HTPA synthase</shortName>
        <ecNumber evidence="1">4.3.3.7</ecNumber>
    </recommendedName>
</protein>
<dbReference type="EC" id="4.3.3.7" evidence="1"/>
<dbReference type="EMBL" id="CP000683">
    <property type="protein sequence ID" value="ABV84789.1"/>
    <property type="molecule type" value="Genomic_DNA"/>
</dbReference>
<dbReference type="SMR" id="A8F1K3"/>
<dbReference type="KEGG" id="rms:RMA_0610"/>
<dbReference type="HOGENOM" id="CLU_049343_7_1_5"/>
<dbReference type="UniPathway" id="UPA00034">
    <property type="reaction ID" value="UER00017"/>
</dbReference>
<dbReference type="Proteomes" id="UP000001311">
    <property type="component" value="Chromosome"/>
</dbReference>
<dbReference type="GO" id="GO:0005737">
    <property type="term" value="C:cytoplasm"/>
    <property type="evidence" value="ECO:0007669"/>
    <property type="project" value="UniProtKB-SubCell"/>
</dbReference>
<dbReference type="GO" id="GO:0008700">
    <property type="term" value="F:(R,S)-4-hydroxy-2-oxoglutarate aldolase activity"/>
    <property type="evidence" value="ECO:0007669"/>
    <property type="project" value="TreeGrafter"/>
</dbReference>
<dbReference type="GO" id="GO:0008840">
    <property type="term" value="F:4-hydroxy-tetrahydrodipicolinate synthase activity"/>
    <property type="evidence" value="ECO:0007669"/>
    <property type="project" value="UniProtKB-UniRule"/>
</dbReference>
<dbReference type="GO" id="GO:0019877">
    <property type="term" value="P:diaminopimelate biosynthetic process"/>
    <property type="evidence" value="ECO:0007669"/>
    <property type="project" value="UniProtKB-UniRule"/>
</dbReference>
<dbReference type="GO" id="GO:0009436">
    <property type="term" value="P:glyoxylate catabolic process"/>
    <property type="evidence" value="ECO:0007669"/>
    <property type="project" value="TreeGrafter"/>
</dbReference>
<dbReference type="GO" id="GO:0009089">
    <property type="term" value="P:lysine biosynthetic process via diaminopimelate"/>
    <property type="evidence" value="ECO:0007669"/>
    <property type="project" value="UniProtKB-UniRule"/>
</dbReference>
<dbReference type="CDD" id="cd00950">
    <property type="entry name" value="DHDPS"/>
    <property type="match status" value="1"/>
</dbReference>
<dbReference type="Gene3D" id="3.20.20.70">
    <property type="entry name" value="Aldolase class I"/>
    <property type="match status" value="1"/>
</dbReference>
<dbReference type="HAMAP" id="MF_00418">
    <property type="entry name" value="DapA"/>
    <property type="match status" value="1"/>
</dbReference>
<dbReference type="InterPro" id="IPR013785">
    <property type="entry name" value="Aldolase_TIM"/>
</dbReference>
<dbReference type="InterPro" id="IPR005263">
    <property type="entry name" value="DapA"/>
</dbReference>
<dbReference type="InterPro" id="IPR002220">
    <property type="entry name" value="DapA-like"/>
</dbReference>
<dbReference type="InterPro" id="IPR020625">
    <property type="entry name" value="Schiff_base-form_aldolases_AS"/>
</dbReference>
<dbReference type="InterPro" id="IPR020624">
    <property type="entry name" value="Schiff_base-form_aldolases_CS"/>
</dbReference>
<dbReference type="NCBIfam" id="TIGR00674">
    <property type="entry name" value="dapA"/>
    <property type="match status" value="1"/>
</dbReference>
<dbReference type="PANTHER" id="PTHR12128:SF66">
    <property type="entry name" value="4-HYDROXY-2-OXOGLUTARATE ALDOLASE, MITOCHONDRIAL"/>
    <property type="match status" value="1"/>
</dbReference>
<dbReference type="PANTHER" id="PTHR12128">
    <property type="entry name" value="DIHYDRODIPICOLINATE SYNTHASE"/>
    <property type="match status" value="1"/>
</dbReference>
<dbReference type="Pfam" id="PF00701">
    <property type="entry name" value="DHDPS"/>
    <property type="match status" value="1"/>
</dbReference>
<dbReference type="PIRSF" id="PIRSF001365">
    <property type="entry name" value="DHDPS"/>
    <property type="match status" value="1"/>
</dbReference>
<dbReference type="PRINTS" id="PR00146">
    <property type="entry name" value="DHPICSNTHASE"/>
</dbReference>
<dbReference type="SMART" id="SM01130">
    <property type="entry name" value="DHDPS"/>
    <property type="match status" value="1"/>
</dbReference>
<dbReference type="SUPFAM" id="SSF51569">
    <property type="entry name" value="Aldolase"/>
    <property type="match status" value="1"/>
</dbReference>
<dbReference type="PROSITE" id="PS00665">
    <property type="entry name" value="DHDPS_1"/>
    <property type="match status" value="1"/>
</dbReference>
<dbReference type="PROSITE" id="PS00666">
    <property type="entry name" value="DHDPS_2"/>
    <property type="match status" value="1"/>
</dbReference>
<keyword id="KW-0028">Amino-acid biosynthesis</keyword>
<keyword id="KW-0963">Cytoplasm</keyword>
<keyword id="KW-0220">Diaminopimelate biosynthesis</keyword>
<keyword id="KW-0456">Lyase</keyword>
<keyword id="KW-0457">Lysine biosynthesis</keyword>
<keyword id="KW-0704">Schiff base</keyword>
<proteinExistence type="inferred from homology"/>
<accession>A8F1K3</accession>
<feature type="chain" id="PRO_0000340984" description="4-hydroxy-tetrahydrodipicolinate synthase">
    <location>
        <begin position="1"/>
        <end position="300"/>
    </location>
</feature>
<feature type="active site" description="Proton donor/acceptor" evidence="1">
    <location>
        <position position="141"/>
    </location>
</feature>
<feature type="active site" description="Schiff-base intermediate with substrate" evidence="1">
    <location>
        <position position="169"/>
    </location>
</feature>
<feature type="binding site" evidence="1">
    <location>
        <position position="53"/>
    </location>
    <ligand>
        <name>pyruvate</name>
        <dbReference type="ChEBI" id="CHEBI:15361"/>
    </ligand>
</feature>
<feature type="binding site" evidence="1">
    <location>
        <position position="211"/>
    </location>
    <ligand>
        <name>pyruvate</name>
        <dbReference type="ChEBI" id="CHEBI:15361"/>
    </ligand>
</feature>
<feature type="site" description="Part of a proton relay during catalysis" evidence="1">
    <location>
        <position position="52"/>
    </location>
</feature>
<feature type="site" description="Part of a proton relay during catalysis" evidence="1">
    <location>
        <position position="115"/>
    </location>
</feature>
<gene>
    <name evidence="1" type="primary">dapA</name>
    <name type="ordered locus">RMA_0610</name>
</gene>
<evidence type="ECO:0000255" key="1">
    <source>
        <dbReference type="HAMAP-Rule" id="MF_00418"/>
    </source>
</evidence>
<evidence type="ECO:0000305" key="2"/>
<name>DAPA_RICM5</name>
<comment type="function">
    <text evidence="1">Catalyzes the condensation of (S)-aspartate-beta-semialdehyde [(S)-ASA] and pyruvate to 4-hydroxy-tetrahydrodipicolinate (HTPA).</text>
</comment>
<comment type="catalytic activity">
    <reaction evidence="1">
        <text>L-aspartate 4-semialdehyde + pyruvate = (2S,4S)-4-hydroxy-2,3,4,5-tetrahydrodipicolinate + H2O + H(+)</text>
        <dbReference type="Rhea" id="RHEA:34171"/>
        <dbReference type="ChEBI" id="CHEBI:15361"/>
        <dbReference type="ChEBI" id="CHEBI:15377"/>
        <dbReference type="ChEBI" id="CHEBI:15378"/>
        <dbReference type="ChEBI" id="CHEBI:67139"/>
        <dbReference type="ChEBI" id="CHEBI:537519"/>
        <dbReference type="EC" id="4.3.3.7"/>
    </reaction>
</comment>
<comment type="pathway">
    <text evidence="1">Amino-acid biosynthesis; L-lysine biosynthesis via DAP pathway; (S)-tetrahydrodipicolinate from L-aspartate: step 3/4.</text>
</comment>
<comment type="subunit">
    <text evidence="1">Homotetramer; dimer of dimers.</text>
</comment>
<comment type="subcellular location">
    <subcellularLocation>
        <location evidence="1">Cytoplasm</location>
    </subcellularLocation>
</comment>
<comment type="similarity">
    <text evidence="1">Belongs to the DapA family.</text>
</comment>
<comment type="caution">
    <text evidence="2">Was originally thought to be a dihydrodipicolinate synthase (DHDPS), catalyzing the condensation of (S)-aspartate-beta-semialdehyde [(S)-ASA] and pyruvate to dihydrodipicolinate (DHDP). However, it was shown in E.coli that the product of the enzymatic reaction is not dihydrodipicolinate but in fact (4S)-4-hydroxy-2,3,4,5-tetrahydro-(2S)-dipicolinic acid (HTPA), and that the consecutive dehydration reaction leading to DHDP is not spontaneous but catalyzed by DapB.</text>
</comment>
<organism>
    <name type="scientific">Rickettsia massiliae (strain Mtu5)</name>
    <dbReference type="NCBI Taxonomy" id="416276"/>
    <lineage>
        <taxon>Bacteria</taxon>
        <taxon>Pseudomonadati</taxon>
        <taxon>Pseudomonadota</taxon>
        <taxon>Alphaproteobacteria</taxon>
        <taxon>Rickettsiales</taxon>
        <taxon>Rickettsiaceae</taxon>
        <taxon>Rickettsieae</taxon>
        <taxon>Rickettsia</taxon>
        <taxon>spotted fever group</taxon>
    </lineage>
</organism>
<sequence>MKIKKIMHNIFKGLITALITPFKDNKLDLYALERIVKHQIKYEVDAVLIAGSTGESSSLSFEEYKLLLQTSVEIVNKCIPIISGCSSNNTTYARALAAESTKIGVDGFMASPPSYVKPTQHGIYKHFEALHEACNLPIMLYSAPTRSGVDFSDETILRLSKLPRILALKDCGVDLERPLRIRATVKKDFNILTGNDEVVLAFNAQGGVGWTSVASNIVPNICKELLEKWNKNDTKGALEIHQKLLPLYTALFVESNPIPIKYAAHYLGLCENEIRPPLTEASDSAKKQIENIITSLSIKI</sequence>
<reference key="1">
    <citation type="journal article" date="2007" name="Genome Res.">
        <title>Lateral gene transfer between obligate intracellular bacteria: evidence from the Rickettsia massiliae genome.</title>
        <authorList>
            <person name="Blanc G."/>
            <person name="Ogata H."/>
            <person name="Robert C."/>
            <person name="Audic S."/>
            <person name="Claverie J.-M."/>
            <person name="Raoult D."/>
        </authorList>
    </citation>
    <scope>NUCLEOTIDE SEQUENCE [LARGE SCALE GENOMIC DNA]</scope>
    <source>
        <strain>Mtu5</strain>
    </source>
</reference>